<comment type="function">
    <text evidence="1">Catalyzes the phosphorylation of pantothenate (Pan), the first step in CoA biosynthesis.</text>
</comment>
<comment type="catalytic activity">
    <reaction evidence="1">
        <text>(R)-pantothenate + ATP = (R)-4'-phosphopantothenate + ADP + H(+)</text>
        <dbReference type="Rhea" id="RHEA:16373"/>
        <dbReference type="ChEBI" id="CHEBI:10986"/>
        <dbReference type="ChEBI" id="CHEBI:15378"/>
        <dbReference type="ChEBI" id="CHEBI:29032"/>
        <dbReference type="ChEBI" id="CHEBI:30616"/>
        <dbReference type="ChEBI" id="CHEBI:456216"/>
        <dbReference type="EC" id="2.7.1.33"/>
    </reaction>
</comment>
<comment type="cofactor">
    <cofactor evidence="1">
        <name>NH4(+)</name>
        <dbReference type="ChEBI" id="CHEBI:28938"/>
    </cofactor>
    <cofactor evidence="1">
        <name>K(+)</name>
        <dbReference type="ChEBI" id="CHEBI:29103"/>
    </cofactor>
    <text evidence="1">A monovalent cation. Ammonium or potassium.</text>
</comment>
<comment type="pathway">
    <text evidence="1">Cofactor biosynthesis; coenzyme A biosynthesis; CoA from (R)-pantothenate: step 1/5.</text>
</comment>
<comment type="subunit">
    <text evidence="1">Homodimer.</text>
</comment>
<comment type="subcellular location">
    <subcellularLocation>
        <location evidence="1">Cytoplasm</location>
    </subcellularLocation>
</comment>
<comment type="similarity">
    <text evidence="1">Belongs to the type III pantothenate kinase family.</text>
</comment>
<accession>A4T5N5</accession>
<reference key="1">
    <citation type="submission" date="2007-04" db="EMBL/GenBank/DDBJ databases">
        <title>Complete sequence of chromosome of Mycobacterium gilvum PYR-GCK.</title>
        <authorList>
            <consortium name="US DOE Joint Genome Institute"/>
            <person name="Copeland A."/>
            <person name="Lucas S."/>
            <person name="Lapidus A."/>
            <person name="Barry K."/>
            <person name="Detter J.C."/>
            <person name="Glavina del Rio T."/>
            <person name="Hammon N."/>
            <person name="Israni S."/>
            <person name="Dalin E."/>
            <person name="Tice H."/>
            <person name="Pitluck S."/>
            <person name="Chain P."/>
            <person name="Malfatti S."/>
            <person name="Shin M."/>
            <person name="Vergez L."/>
            <person name="Schmutz J."/>
            <person name="Larimer F."/>
            <person name="Land M."/>
            <person name="Hauser L."/>
            <person name="Kyrpides N."/>
            <person name="Mikhailova N."/>
            <person name="Miller C."/>
            <person name="Richardson P."/>
        </authorList>
    </citation>
    <scope>NUCLEOTIDE SEQUENCE [LARGE SCALE GENOMIC DNA]</scope>
    <source>
        <strain>PYR-GCK</strain>
    </source>
</reference>
<feature type="chain" id="PRO_1000085855" description="Type III pantothenate kinase">
    <location>
        <begin position="1"/>
        <end position="270"/>
    </location>
</feature>
<feature type="active site" description="Proton acceptor" evidence="1">
    <location>
        <position position="111"/>
    </location>
</feature>
<feature type="binding site" evidence="1">
    <location>
        <begin position="6"/>
        <end position="13"/>
    </location>
    <ligand>
        <name>ATP</name>
        <dbReference type="ChEBI" id="CHEBI:30616"/>
    </ligand>
</feature>
<feature type="binding site" evidence="1">
    <location>
        <begin position="109"/>
        <end position="112"/>
    </location>
    <ligand>
        <name>substrate</name>
    </ligand>
</feature>
<feature type="binding site" evidence="1">
    <location>
        <position position="131"/>
    </location>
    <ligand>
        <name>K(+)</name>
        <dbReference type="ChEBI" id="CHEBI:29103"/>
    </ligand>
</feature>
<feature type="binding site" evidence="1">
    <location>
        <position position="134"/>
    </location>
    <ligand>
        <name>ATP</name>
        <dbReference type="ChEBI" id="CHEBI:30616"/>
    </ligand>
</feature>
<feature type="binding site" evidence="1">
    <location>
        <position position="186"/>
    </location>
    <ligand>
        <name>substrate</name>
    </ligand>
</feature>
<sequence length="270" mass="28815">MLLAIDVRNTHTVVGLISGSGSHGKVEHHWRIRTESEVTADELALTIDGLIGDDAELLTGAAGLSTVPSVLHEVRVMLEQYWPSVPHVLIEPGVRTGIPLLVDNPKEVGADRIVNCLAAYQKYGSAAIVVDFGSSICVDVVSAKGEFLGGAIAPGVQVSSDAAAARSAALRRVELTRPRSVVGKNTVECMQAGAVFGFAALVDGLVNRIREDVDGFGGDDVTVVATGHSAPLVLEDLSTVQHYDRHLTLDGLRLVFERNRDNQRKLKQAR</sequence>
<organism>
    <name type="scientific">Mycolicibacterium gilvum (strain PYR-GCK)</name>
    <name type="common">Mycobacterium gilvum (strain PYR-GCK)</name>
    <dbReference type="NCBI Taxonomy" id="350054"/>
    <lineage>
        <taxon>Bacteria</taxon>
        <taxon>Bacillati</taxon>
        <taxon>Actinomycetota</taxon>
        <taxon>Actinomycetes</taxon>
        <taxon>Mycobacteriales</taxon>
        <taxon>Mycobacteriaceae</taxon>
        <taxon>Mycolicibacterium</taxon>
    </lineage>
</organism>
<gene>
    <name evidence="1" type="primary">coaX</name>
    <name type="ordered locus">Mflv_1426</name>
</gene>
<keyword id="KW-0067">ATP-binding</keyword>
<keyword id="KW-0173">Coenzyme A biosynthesis</keyword>
<keyword id="KW-0963">Cytoplasm</keyword>
<keyword id="KW-0418">Kinase</keyword>
<keyword id="KW-0479">Metal-binding</keyword>
<keyword id="KW-0547">Nucleotide-binding</keyword>
<keyword id="KW-0630">Potassium</keyword>
<keyword id="KW-0808">Transferase</keyword>
<name>COAX_MYCGI</name>
<evidence type="ECO:0000255" key="1">
    <source>
        <dbReference type="HAMAP-Rule" id="MF_01274"/>
    </source>
</evidence>
<protein>
    <recommendedName>
        <fullName evidence="1">Type III pantothenate kinase</fullName>
        <ecNumber evidence="1">2.7.1.33</ecNumber>
    </recommendedName>
    <alternativeName>
        <fullName evidence="1">PanK-III</fullName>
    </alternativeName>
    <alternativeName>
        <fullName evidence="1">Pantothenic acid kinase</fullName>
    </alternativeName>
</protein>
<proteinExistence type="inferred from homology"/>
<dbReference type="EC" id="2.7.1.33" evidence="1"/>
<dbReference type="EMBL" id="CP000656">
    <property type="protein sequence ID" value="ABP43908.1"/>
    <property type="molecule type" value="Genomic_DNA"/>
</dbReference>
<dbReference type="SMR" id="A4T5N5"/>
<dbReference type="STRING" id="350054.Mflv_1426"/>
<dbReference type="KEGG" id="mgi:Mflv_1426"/>
<dbReference type="eggNOG" id="COG1521">
    <property type="taxonomic scope" value="Bacteria"/>
</dbReference>
<dbReference type="HOGENOM" id="CLU_066627_1_0_11"/>
<dbReference type="OrthoDB" id="9804707at2"/>
<dbReference type="UniPathway" id="UPA00241">
    <property type="reaction ID" value="UER00352"/>
</dbReference>
<dbReference type="GO" id="GO:0005737">
    <property type="term" value="C:cytoplasm"/>
    <property type="evidence" value="ECO:0007669"/>
    <property type="project" value="UniProtKB-SubCell"/>
</dbReference>
<dbReference type="GO" id="GO:0005524">
    <property type="term" value="F:ATP binding"/>
    <property type="evidence" value="ECO:0007669"/>
    <property type="project" value="UniProtKB-UniRule"/>
</dbReference>
<dbReference type="GO" id="GO:0046872">
    <property type="term" value="F:metal ion binding"/>
    <property type="evidence" value="ECO:0007669"/>
    <property type="project" value="UniProtKB-KW"/>
</dbReference>
<dbReference type="GO" id="GO:0004594">
    <property type="term" value="F:pantothenate kinase activity"/>
    <property type="evidence" value="ECO:0007669"/>
    <property type="project" value="UniProtKB-UniRule"/>
</dbReference>
<dbReference type="GO" id="GO:0015937">
    <property type="term" value="P:coenzyme A biosynthetic process"/>
    <property type="evidence" value="ECO:0007669"/>
    <property type="project" value="UniProtKB-UniRule"/>
</dbReference>
<dbReference type="CDD" id="cd24015">
    <property type="entry name" value="ASKHA_NBD_PanK-III"/>
    <property type="match status" value="1"/>
</dbReference>
<dbReference type="Gene3D" id="3.30.420.40">
    <property type="match status" value="2"/>
</dbReference>
<dbReference type="HAMAP" id="MF_01274">
    <property type="entry name" value="Pantothen_kinase_3"/>
    <property type="match status" value="1"/>
</dbReference>
<dbReference type="InterPro" id="IPR043129">
    <property type="entry name" value="ATPase_NBD"/>
</dbReference>
<dbReference type="InterPro" id="IPR004619">
    <property type="entry name" value="Type_III_PanK"/>
</dbReference>
<dbReference type="NCBIfam" id="TIGR00671">
    <property type="entry name" value="baf"/>
    <property type="match status" value="1"/>
</dbReference>
<dbReference type="NCBIfam" id="NF009845">
    <property type="entry name" value="PRK13318.1-3"/>
    <property type="match status" value="1"/>
</dbReference>
<dbReference type="PANTHER" id="PTHR34265">
    <property type="entry name" value="TYPE III PANTOTHENATE KINASE"/>
    <property type="match status" value="1"/>
</dbReference>
<dbReference type="PANTHER" id="PTHR34265:SF1">
    <property type="entry name" value="TYPE III PANTOTHENATE KINASE"/>
    <property type="match status" value="1"/>
</dbReference>
<dbReference type="Pfam" id="PF03309">
    <property type="entry name" value="Pan_kinase"/>
    <property type="match status" value="1"/>
</dbReference>
<dbReference type="SUPFAM" id="SSF53067">
    <property type="entry name" value="Actin-like ATPase domain"/>
    <property type="match status" value="2"/>
</dbReference>